<evidence type="ECO:0000250" key="1"/>
<evidence type="ECO:0000250" key="2">
    <source>
        <dbReference type="UniProtKB" id="O95319"/>
    </source>
</evidence>
<evidence type="ECO:0000250" key="3">
    <source>
        <dbReference type="UniProtKB" id="Q9Z0H4"/>
    </source>
</evidence>
<evidence type="ECO:0000255" key="4">
    <source>
        <dbReference type="PROSITE-ProRule" id="PRU00176"/>
    </source>
</evidence>
<evidence type="ECO:0000269" key="5">
    <source>
    </source>
</evidence>
<evidence type="ECO:0000303" key="6">
    <source>
    </source>
</evidence>
<evidence type="ECO:0000303" key="7">
    <source ref="2"/>
</evidence>
<evidence type="ECO:0000305" key="8"/>
<reference key="1">
    <citation type="journal article" date="1999" name="Gene">
        <title>Developmentally-regulated expression of mNapor encoding an apoptosis-induced ELAV-type RNA binding protein.</title>
        <authorList>
            <person name="Choi D.-K."/>
            <person name="Ito T."/>
            <person name="Tsukahara F."/>
            <person name="Hirai M."/>
            <person name="Sakaki Y."/>
        </authorList>
    </citation>
    <scope>NUCLEOTIDE SEQUENCE [MRNA] (ISOFORM 1)</scope>
    <source>
        <tissue>Hippocampus</tissue>
    </source>
</reference>
<reference key="2">
    <citation type="submission" date="1998-08" db="EMBL/GenBank/DDBJ databases">
        <title>The expression of the ETR-R3 RNA binding proteins in the central nervous system.</title>
        <authorList>
            <person name="Tait S."/>
            <person name="Birling M.C."/>
            <person name="Brophy P.J."/>
        </authorList>
    </citation>
    <scope>NUCLEOTIDE SEQUENCE [MRNA] (ISOFORMS 3 AND 4)</scope>
</reference>
<reference key="3">
    <citation type="journal article" date="2004" name="Genome Res.">
        <title>The status, quality, and expansion of the NIH full-length cDNA project: the Mammalian Gene Collection (MGC).</title>
        <authorList>
            <consortium name="The MGC Project Team"/>
        </authorList>
    </citation>
    <scope>NUCLEOTIDE SEQUENCE [LARGE SCALE MRNA] (ISOFORM 2)</scope>
    <source>
        <tissue>Brain</tissue>
    </source>
</reference>
<reference key="4">
    <citation type="journal article" date="2002" name="RNA">
        <title>Region-specific alternative splicing in the nervous system: implications for regulation by the RNA-binding protein NAPOR.</title>
        <authorList>
            <person name="Zhang W."/>
            <person name="Liu H."/>
            <person name="Han K."/>
            <person name="Grabowski P.J."/>
        </authorList>
    </citation>
    <scope>TISSUE SPECIFICITY</scope>
</reference>
<accession>Q792H5</accession>
<accession>A1L1J5</accession>
<accession>O88756</accession>
<accession>Q78ZF0</accession>
<name>CELF2_RAT</name>
<sequence length="508" mass="54271">MRCPKSAVTMRNEELLLSNGTANKMNGALDHSDQPDPDAIKMFVGQIPRSWSEKELKELFEPYGAVYQINVLRDRSQNPPQSKGCCFVTFYTRKAALEAQNALHNIKTLPGMHHPIQMKPADSEKSNAVEDRKLFIGMVSKKCNENDIRVMFSPFGQIEECRILRGPDGLSRGCAFVTFSTRAMAQNAIKAMHQSQTMEGCSSPIVVKFADTQKDKEQRRLQQQLAQQMQQLNTATWGNLTGLGGLTPQYLALLQQATSSSNLGAFSGIQQMAGMNALQLQNLATLAAAAAAAQTSATSTNANPLSSTSSALGALTSPVAASTPNSTAGAAMNSLTSLGTLQGLAGATVGLNNINALAGMAALNGGLGATGLTNGTAGTMDALTQAYSGIQQYAAAALPTLYSQSLLQQQSAAGSQKEGPEGANLFIYHLPQEFGDQDILQMFMPFGNVISAKVFIDKQTNLSKCFGFVSYDNPVSAQAAIQAMNGFQIGMKRLKVQLKRSKNDSKPY</sequence>
<gene>
    <name type="primary">Celf2</name>
    <name type="synonym">Cugbp2</name>
    <name type="synonym">Etr3</name>
    <name type="synonym">Napor</name>
</gene>
<feature type="chain" id="PRO_0000295192" description="CUGBP Elav-like family member 2">
    <location>
        <begin position="1"/>
        <end position="508"/>
    </location>
</feature>
<feature type="domain" description="RRM 1" evidence="4">
    <location>
        <begin position="40"/>
        <end position="123"/>
    </location>
</feature>
<feature type="domain" description="RRM 2" evidence="4">
    <location>
        <begin position="132"/>
        <end position="212"/>
    </location>
</feature>
<feature type="domain" description="RRM 3" evidence="4">
    <location>
        <begin position="423"/>
        <end position="501"/>
    </location>
</feature>
<feature type="region of interest" description="Necessary for RNA-binding, TNNT2 exon 5 and NMDA R1 exon 21 inclusion" evidence="1">
    <location>
        <begin position="1"/>
        <end position="283"/>
    </location>
</feature>
<feature type="region of interest" description="Necessary for RNA-binding, TNNT2 exon 5 and NMDA R1 exon 21 inclusion" evidence="1">
    <location>
        <begin position="357"/>
        <end position="508"/>
    </location>
</feature>
<feature type="splice variant" id="VSP_026813" description="In isoform 2 and isoform 3." evidence="6 7">
    <location>
        <begin position="1"/>
        <end position="24"/>
    </location>
</feature>
<feature type="splice variant" id="VSP_026814" description="In isoform 4." evidence="7">
    <original>M</original>
    <variation>MFERTSELAFVETISVESM</variation>
    <location>
        <position position="1"/>
    </location>
</feature>
<feature type="splice variant" id="VSP_026815" description="In isoform 3 and isoform 4." evidence="7">
    <original>A</original>
    <variation>AVAQMLS</variation>
    <location>
        <position position="358"/>
    </location>
</feature>
<dbReference type="EMBL" id="AF090695">
    <property type="protein sequence ID" value="AAD13762.1"/>
    <property type="molecule type" value="mRNA"/>
</dbReference>
<dbReference type="EMBL" id="AJ010351">
    <property type="protein sequence ID" value="CAA09102.1"/>
    <property type="molecule type" value="mRNA"/>
</dbReference>
<dbReference type="EMBL" id="AJ010386">
    <property type="protein sequence ID" value="CAA09103.1"/>
    <property type="molecule type" value="mRNA"/>
</dbReference>
<dbReference type="EMBL" id="BC129096">
    <property type="protein sequence ID" value="AAI29097.1"/>
    <property type="molecule type" value="mRNA"/>
</dbReference>
<dbReference type="RefSeq" id="NP_058893.2">
    <molecule id="Q792H5-4"/>
    <property type="nucleotide sequence ID" value="NM_017197.4"/>
</dbReference>
<dbReference type="RefSeq" id="XP_008770084.1">
    <property type="nucleotide sequence ID" value="XM_008771862.2"/>
</dbReference>
<dbReference type="RefSeq" id="XP_008770086.1">
    <property type="nucleotide sequence ID" value="XM_008771864.2"/>
</dbReference>
<dbReference type="RefSeq" id="XP_063132361.1">
    <molecule id="Q792H5-3"/>
    <property type="nucleotide sequence ID" value="XM_063276291.1"/>
</dbReference>
<dbReference type="RefSeq" id="XP_063132365.1">
    <molecule id="Q792H5-2"/>
    <property type="nucleotide sequence ID" value="XM_063276295.1"/>
</dbReference>
<dbReference type="RefSeq" id="XP_063132366.1">
    <molecule id="Q792H5-2"/>
    <property type="nucleotide sequence ID" value="XM_063276296.1"/>
</dbReference>
<dbReference type="RefSeq" id="XP_063132367.1">
    <molecule id="Q792H5-2"/>
    <property type="nucleotide sequence ID" value="XM_063276297.1"/>
</dbReference>
<dbReference type="RefSeq" id="XP_063132373.1">
    <molecule id="Q792H5-4"/>
    <property type="nucleotide sequence ID" value="XM_063276303.1"/>
</dbReference>
<dbReference type="BMRB" id="Q792H5"/>
<dbReference type="SMR" id="Q792H5"/>
<dbReference type="BioGRID" id="248076">
    <property type="interactions" value="2"/>
</dbReference>
<dbReference type="FunCoup" id="Q792H5">
    <property type="interactions" value="1448"/>
</dbReference>
<dbReference type="STRING" id="10116.ENSRNOP00000023436"/>
<dbReference type="iPTMnet" id="Q792H5"/>
<dbReference type="PhosphoSitePlus" id="Q792H5"/>
<dbReference type="SwissPalm" id="Q792H5"/>
<dbReference type="PaxDb" id="10116-ENSRNOP00000023436"/>
<dbReference type="Ensembl" id="ENSRNOT00000113911.1">
    <molecule id="Q792H5-3"/>
    <property type="protein sequence ID" value="ENSRNOP00000093103.1"/>
    <property type="gene ID" value="ENSRNOG00000023661.7"/>
</dbReference>
<dbReference type="GeneID" id="29428"/>
<dbReference type="KEGG" id="rno:29428"/>
<dbReference type="AGR" id="RGD:68347"/>
<dbReference type="CTD" id="10659"/>
<dbReference type="RGD" id="68347">
    <property type="gene designation" value="Celf2"/>
</dbReference>
<dbReference type="eggNOG" id="KOG0144">
    <property type="taxonomic scope" value="Eukaryota"/>
</dbReference>
<dbReference type="GeneTree" id="ENSGT00940000155461"/>
<dbReference type="InParanoid" id="Q792H5"/>
<dbReference type="OrthoDB" id="267048at2759"/>
<dbReference type="PhylomeDB" id="Q792H5"/>
<dbReference type="TreeFam" id="TF314924"/>
<dbReference type="PRO" id="PR:Q792H5"/>
<dbReference type="Proteomes" id="UP000002494">
    <property type="component" value="Chromosome 17"/>
</dbReference>
<dbReference type="GO" id="GO:0005737">
    <property type="term" value="C:cytoplasm"/>
    <property type="evidence" value="ECO:0000266"/>
    <property type="project" value="RGD"/>
</dbReference>
<dbReference type="GO" id="GO:0005634">
    <property type="term" value="C:nucleus"/>
    <property type="evidence" value="ECO:0000250"/>
    <property type="project" value="UniProtKB"/>
</dbReference>
<dbReference type="GO" id="GO:1990904">
    <property type="term" value="C:ribonucleoprotein complex"/>
    <property type="evidence" value="ECO:0000318"/>
    <property type="project" value="GO_Central"/>
</dbReference>
<dbReference type="GO" id="GO:0106222">
    <property type="term" value="F:lncRNA binding"/>
    <property type="evidence" value="ECO:0000266"/>
    <property type="project" value="RGD"/>
</dbReference>
<dbReference type="GO" id="GO:0003730">
    <property type="term" value="F:mRNA 3'-UTR binding"/>
    <property type="evidence" value="ECO:0000314"/>
    <property type="project" value="ARUK-UCL"/>
</dbReference>
<dbReference type="GO" id="GO:0036002">
    <property type="term" value="F:pre-mRNA binding"/>
    <property type="evidence" value="ECO:0000266"/>
    <property type="project" value="RGD"/>
</dbReference>
<dbReference type="GO" id="GO:0003723">
    <property type="term" value="F:RNA binding"/>
    <property type="evidence" value="ECO:0000314"/>
    <property type="project" value="RGD"/>
</dbReference>
<dbReference type="GO" id="GO:0006376">
    <property type="term" value="P:mRNA splice site recognition"/>
    <property type="evidence" value="ECO:0000266"/>
    <property type="project" value="RGD"/>
</dbReference>
<dbReference type="GO" id="GO:0016441">
    <property type="term" value="P:post-transcriptional gene silencing"/>
    <property type="evidence" value="ECO:0000315"/>
    <property type="project" value="ARUK-UCL"/>
</dbReference>
<dbReference type="GO" id="GO:0000381">
    <property type="term" value="P:regulation of alternative mRNA splicing, via spliceosome"/>
    <property type="evidence" value="ECO:0000318"/>
    <property type="project" value="GO_Central"/>
</dbReference>
<dbReference type="CDD" id="cd12631">
    <property type="entry name" value="RRM1_CELF1_2_Bruno"/>
    <property type="match status" value="1"/>
</dbReference>
<dbReference type="CDD" id="cd12634">
    <property type="entry name" value="RRM2_CELF1_2"/>
    <property type="match status" value="1"/>
</dbReference>
<dbReference type="CDD" id="cd12638">
    <property type="entry name" value="RRM3_CELF1_2"/>
    <property type="match status" value="1"/>
</dbReference>
<dbReference type="FunFam" id="3.30.70.330:FF:000013">
    <property type="entry name" value="CUGBP Elav-like family member 1 isoform 2"/>
    <property type="match status" value="1"/>
</dbReference>
<dbReference type="FunFam" id="3.30.70.330:FF:000015">
    <property type="entry name" value="CUGBP Elav-like family member 1 isoform 2"/>
    <property type="match status" value="1"/>
</dbReference>
<dbReference type="FunFam" id="3.30.70.330:FF:000016">
    <property type="entry name" value="CUGBP Elav-like family member 1 isoform 2"/>
    <property type="match status" value="1"/>
</dbReference>
<dbReference type="Gene3D" id="3.30.70.330">
    <property type="match status" value="3"/>
</dbReference>
<dbReference type="InterPro" id="IPR034196">
    <property type="entry name" value="CELF1/2_RRM1"/>
</dbReference>
<dbReference type="InterPro" id="IPR034198">
    <property type="entry name" value="CELF1/2_RRM2"/>
</dbReference>
<dbReference type="InterPro" id="IPR034199">
    <property type="entry name" value="CELF1/2_RRM3"/>
</dbReference>
<dbReference type="InterPro" id="IPR002343">
    <property type="entry name" value="Hud_Sxl_RNA"/>
</dbReference>
<dbReference type="InterPro" id="IPR012677">
    <property type="entry name" value="Nucleotide-bd_a/b_plait_sf"/>
</dbReference>
<dbReference type="InterPro" id="IPR035979">
    <property type="entry name" value="RBD_domain_sf"/>
</dbReference>
<dbReference type="InterPro" id="IPR000504">
    <property type="entry name" value="RRM_dom"/>
</dbReference>
<dbReference type="PANTHER" id="PTHR24012">
    <property type="entry name" value="RNA BINDING PROTEIN"/>
    <property type="match status" value="1"/>
</dbReference>
<dbReference type="Pfam" id="PF00076">
    <property type="entry name" value="RRM_1"/>
    <property type="match status" value="3"/>
</dbReference>
<dbReference type="PRINTS" id="PR00961">
    <property type="entry name" value="HUDSXLRNA"/>
</dbReference>
<dbReference type="SMART" id="SM00360">
    <property type="entry name" value="RRM"/>
    <property type="match status" value="3"/>
</dbReference>
<dbReference type="SUPFAM" id="SSF54928">
    <property type="entry name" value="RNA-binding domain, RBD"/>
    <property type="match status" value="2"/>
</dbReference>
<dbReference type="PROSITE" id="PS50102">
    <property type="entry name" value="RRM"/>
    <property type="match status" value="3"/>
</dbReference>
<protein>
    <recommendedName>
        <fullName>CUGBP Elav-like family member 2</fullName>
        <shortName>CELF-2</shortName>
    </recommendedName>
    <alternativeName>
        <fullName>Bruno-like protein 3</fullName>
    </alternativeName>
    <alternativeName>
        <fullName>CUG triplet repeat RNA-binding protein 2</fullName>
        <shortName>CUG-BP2</shortName>
    </alternativeName>
    <alternativeName>
        <fullName>CUG-BP- and ETR-3-like factor 2</fullName>
    </alternativeName>
    <alternativeName>
        <fullName>ELAV-type RNA-binding protein 3</fullName>
        <shortName>ETR-3</shortName>
        <shortName>Protein ETR-R3</shortName>
    </alternativeName>
    <alternativeName>
        <fullName>Neuroblastoma apoptosis-related RNA-binding protein</fullName>
        <shortName>rNapor</shortName>
    </alternativeName>
    <alternativeName>
        <fullName>RNA-binding protein BRUNOL-3</fullName>
    </alternativeName>
</protein>
<keyword id="KW-0025">Alternative splicing</keyword>
<keyword id="KW-0963">Cytoplasm</keyword>
<keyword id="KW-0507">mRNA processing</keyword>
<keyword id="KW-0539">Nucleus</keyword>
<keyword id="KW-1185">Reference proteome</keyword>
<keyword id="KW-0677">Repeat</keyword>
<keyword id="KW-0678">Repressor</keyword>
<keyword id="KW-0694">RNA-binding</keyword>
<organism>
    <name type="scientific">Rattus norvegicus</name>
    <name type="common">Rat</name>
    <dbReference type="NCBI Taxonomy" id="10116"/>
    <lineage>
        <taxon>Eukaryota</taxon>
        <taxon>Metazoa</taxon>
        <taxon>Chordata</taxon>
        <taxon>Craniata</taxon>
        <taxon>Vertebrata</taxon>
        <taxon>Euteleostomi</taxon>
        <taxon>Mammalia</taxon>
        <taxon>Eutheria</taxon>
        <taxon>Euarchontoglires</taxon>
        <taxon>Glires</taxon>
        <taxon>Rodentia</taxon>
        <taxon>Myomorpha</taxon>
        <taxon>Muroidea</taxon>
        <taxon>Muridae</taxon>
        <taxon>Murinae</taxon>
        <taxon>Rattus</taxon>
    </lineage>
</organism>
<comment type="function">
    <text evidence="2 3">RNA-binding protein implicated in the regulation of several post-transcriptional events. Involved in pre-mRNA alternative splicing, mRNA translation and stability. Mediates exon inclusion and/or exclusion in pre-mRNA that are subject to tissue-specific and developmentally regulated alternative splicing. Specifically activates exon 5 inclusion of TNNT2 in embryonic, but not adult, skeletal muscle. Activates TNNT2 exon 5 inclusion by antagonizing the repressive effect of PTB. Acts both as an activator and as a repressor of a pair of coregulated exons: promotes inclusion of the smooth muscle (SM) exon but exclusion of the non-muscle (NM) exon in actinin pre-mRNAs. Promotes inclusion of exonS 21 and exclusion of exon 5 of the NMDA receptor R1 pre-mRNA. Involved in the apoB RNA editing activity. Increases COX2 mRNA stability and inhibits COX2 mRNA translation in epithelial cells after radiation injury. Modulates the cellular apoptosis program by regulating COX2-mediated prostaglandin E2 (PGE2) expression. Binds to (CUG)n triplet repeats in the 3'-UTR of transcripts such as DMPK. Binds to the muscle-specific splicing enhancer (MSE) intronic sites flanking the TNNT2 alternative exon 5. Binds preferentially to UG-rich sequences, in particular UG repeat and UGUU motifs. Binds to apoB mRNA, specifically to AU-rich sequences located immediately upstream of the edited cytidine. Binds AU-rich sequences in the 3'-UTR of COX2 mRNA. Binds to an intronic RNA element responsible for the silencing of exon 21 splicing. Binds to (CUG)n repeats (By similarity). May be a specific regulator of miRNA biogenesis. Binds to primary microRNA pri-MIR140 and, with CELF1, negatively regulates the processing to mature miRNA (By similarity).</text>
</comment>
<comment type="subunit">
    <text evidence="1">Interacts with A1CF.</text>
</comment>
<comment type="subcellular location">
    <subcellularLocation>
        <location evidence="2">Nucleus</location>
    </subcellularLocation>
    <subcellularLocation>
        <location evidence="3">Cytoplasm</location>
    </subcellularLocation>
    <text evidence="1">Accumulates in the cytoplasm after ionizing radiation. Colocalizes with APOBEC1 and A1CF. RNA-binding activity is detected in both nuclear and cytoplasmic compartments (By similarity).</text>
</comment>
<comment type="alternative products">
    <event type="alternative splicing"/>
    <isoform>
        <id>Q792H5-1</id>
        <name>1</name>
        <sequence type="displayed"/>
    </isoform>
    <isoform>
        <id>Q792H5-2</id>
        <name>2</name>
        <sequence type="described" ref="VSP_026813"/>
    </isoform>
    <isoform>
        <id>Q792H5-3</id>
        <name>3</name>
        <name>ETR-R3a</name>
        <sequence type="described" ref="VSP_026813 VSP_026815"/>
    </isoform>
    <isoform>
        <id>Q792H5-4</id>
        <name>4</name>
        <name>ETR-R3b</name>
        <sequence type="described" ref="VSP_026814 VSP_026815"/>
    </isoform>
</comment>
<comment type="tissue specificity">
    <text evidence="5">Strongly expressed in forebrain regions, including the cerebral cortex and hippocampus. Moderately expressed in hindbrain regions, including the cerebellum and spinal cord.</text>
</comment>
<comment type="similarity">
    <text evidence="8">Belongs to the CELF/BRUNOL family.</text>
</comment>
<proteinExistence type="evidence at transcript level"/>